<name>CCA_STRSV</name>
<keyword id="KW-0067">ATP-binding</keyword>
<keyword id="KW-0460">Magnesium</keyword>
<keyword id="KW-0479">Metal-binding</keyword>
<keyword id="KW-0547">Nucleotide-binding</keyword>
<keyword id="KW-0548">Nucleotidyltransferase</keyword>
<keyword id="KW-1185">Reference proteome</keyword>
<keyword id="KW-0692">RNA repair</keyword>
<keyword id="KW-0694">RNA-binding</keyword>
<keyword id="KW-0808">Transferase</keyword>
<keyword id="KW-0819">tRNA processing</keyword>
<dbReference type="EC" id="2.7.7.72" evidence="1"/>
<dbReference type="EMBL" id="CP000387">
    <property type="protein sequence ID" value="ABN44499.1"/>
    <property type="molecule type" value="Genomic_DNA"/>
</dbReference>
<dbReference type="RefSeq" id="WP_011836911.1">
    <property type="nucleotide sequence ID" value="NC_009009.1"/>
</dbReference>
<dbReference type="RefSeq" id="YP_001035049.1">
    <property type="nucleotide sequence ID" value="NC_009009.1"/>
</dbReference>
<dbReference type="SMR" id="A3CMU4"/>
<dbReference type="STRING" id="388919.SSA_1086"/>
<dbReference type="KEGG" id="ssa:SSA_1086"/>
<dbReference type="PATRIC" id="fig|388919.9.peg.1033"/>
<dbReference type="eggNOG" id="COG0617">
    <property type="taxonomic scope" value="Bacteria"/>
</dbReference>
<dbReference type="HOGENOM" id="CLU_015961_3_0_9"/>
<dbReference type="OrthoDB" id="9805698at2"/>
<dbReference type="Proteomes" id="UP000002148">
    <property type="component" value="Chromosome"/>
</dbReference>
<dbReference type="GO" id="GO:0005524">
    <property type="term" value="F:ATP binding"/>
    <property type="evidence" value="ECO:0007669"/>
    <property type="project" value="UniProtKB-UniRule"/>
</dbReference>
<dbReference type="GO" id="GO:0004810">
    <property type="term" value="F:CCA tRNA nucleotidyltransferase activity"/>
    <property type="evidence" value="ECO:0007669"/>
    <property type="project" value="UniProtKB-UniRule"/>
</dbReference>
<dbReference type="GO" id="GO:0000287">
    <property type="term" value="F:magnesium ion binding"/>
    <property type="evidence" value="ECO:0007669"/>
    <property type="project" value="UniProtKB-UniRule"/>
</dbReference>
<dbReference type="GO" id="GO:0000049">
    <property type="term" value="F:tRNA binding"/>
    <property type="evidence" value="ECO:0007669"/>
    <property type="project" value="UniProtKB-UniRule"/>
</dbReference>
<dbReference type="GO" id="GO:0042245">
    <property type="term" value="P:RNA repair"/>
    <property type="evidence" value="ECO:0007669"/>
    <property type="project" value="UniProtKB-KW"/>
</dbReference>
<dbReference type="GO" id="GO:0001680">
    <property type="term" value="P:tRNA 3'-terminal CCA addition"/>
    <property type="evidence" value="ECO:0007669"/>
    <property type="project" value="UniProtKB-UniRule"/>
</dbReference>
<dbReference type="CDD" id="cd05398">
    <property type="entry name" value="NT_ClassII-CCAase"/>
    <property type="match status" value="1"/>
</dbReference>
<dbReference type="Gene3D" id="1.10.110.30">
    <property type="match status" value="1"/>
</dbReference>
<dbReference type="Gene3D" id="1.10.246.80">
    <property type="match status" value="1"/>
</dbReference>
<dbReference type="Gene3D" id="1.20.58.560">
    <property type="match status" value="1"/>
</dbReference>
<dbReference type="Gene3D" id="3.30.460.10">
    <property type="entry name" value="Beta Polymerase, domain 2"/>
    <property type="match status" value="1"/>
</dbReference>
<dbReference type="HAMAP" id="MF_01263">
    <property type="entry name" value="CCA_bact_type3"/>
    <property type="match status" value="1"/>
</dbReference>
<dbReference type="InterPro" id="IPR050264">
    <property type="entry name" value="Bact_CCA-adding_enz_type3_sf"/>
</dbReference>
<dbReference type="InterPro" id="IPR032810">
    <property type="entry name" value="CCA-adding_enz_C"/>
</dbReference>
<dbReference type="InterPro" id="IPR023068">
    <property type="entry name" value="CCA-adding_enz_firmicutes"/>
</dbReference>
<dbReference type="InterPro" id="IPR043519">
    <property type="entry name" value="NT_sf"/>
</dbReference>
<dbReference type="InterPro" id="IPR002646">
    <property type="entry name" value="PolA_pol_head_dom"/>
</dbReference>
<dbReference type="InterPro" id="IPR032828">
    <property type="entry name" value="PolyA_RNA-bd"/>
</dbReference>
<dbReference type="NCBIfam" id="NF009814">
    <property type="entry name" value="PRK13299.1"/>
    <property type="match status" value="1"/>
</dbReference>
<dbReference type="PANTHER" id="PTHR46173">
    <property type="entry name" value="CCA TRNA NUCLEOTIDYLTRANSFERASE 1, MITOCHONDRIAL"/>
    <property type="match status" value="1"/>
</dbReference>
<dbReference type="PANTHER" id="PTHR46173:SF1">
    <property type="entry name" value="CCA TRNA NUCLEOTIDYLTRANSFERASE 1, MITOCHONDRIAL"/>
    <property type="match status" value="1"/>
</dbReference>
<dbReference type="Pfam" id="PF01743">
    <property type="entry name" value="PolyA_pol"/>
    <property type="match status" value="1"/>
</dbReference>
<dbReference type="Pfam" id="PF12627">
    <property type="entry name" value="PolyA_pol_RNAbd"/>
    <property type="match status" value="1"/>
</dbReference>
<dbReference type="Pfam" id="PF13735">
    <property type="entry name" value="tRNA_NucTran2_2"/>
    <property type="match status" value="1"/>
</dbReference>
<dbReference type="SUPFAM" id="SSF81301">
    <property type="entry name" value="Nucleotidyltransferase"/>
    <property type="match status" value="1"/>
</dbReference>
<dbReference type="SUPFAM" id="SSF81891">
    <property type="entry name" value="Poly A polymerase C-terminal region-like"/>
    <property type="match status" value="1"/>
</dbReference>
<accession>A3CMU4</accession>
<comment type="function">
    <text evidence="1">Catalyzes the addition and repair of the essential 3'-terminal CCA sequence in tRNAs without using a nucleic acid template. Adds these three nucleotides in the order of C, C, and A to the tRNA nucleotide-73, using CTP and ATP as substrates and producing inorganic pyrophosphate. tRNA 3'-terminal CCA addition is required both for tRNA processing and repair. Also involved in tRNA surveillance by mediating tandem CCA addition to generate a CCACCA at the 3' terminus of unstable tRNAs. While stable tRNAs receive only 3'-terminal CCA, unstable tRNAs are marked with CCACCA and rapidly degraded.</text>
</comment>
<comment type="catalytic activity">
    <reaction evidence="1">
        <text>a tRNA precursor + 2 CTP + ATP = a tRNA with a 3' CCA end + 3 diphosphate</text>
        <dbReference type="Rhea" id="RHEA:14433"/>
        <dbReference type="Rhea" id="RHEA-COMP:10465"/>
        <dbReference type="Rhea" id="RHEA-COMP:10468"/>
        <dbReference type="ChEBI" id="CHEBI:30616"/>
        <dbReference type="ChEBI" id="CHEBI:33019"/>
        <dbReference type="ChEBI" id="CHEBI:37563"/>
        <dbReference type="ChEBI" id="CHEBI:74896"/>
        <dbReference type="ChEBI" id="CHEBI:83071"/>
        <dbReference type="EC" id="2.7.7.72"/>
    </reaction>
</comment>
<comment type="catalytic activity">
    <reaction evidence="1">
        <text>a tRNA with a 3' CCA end + 2 CTP + ATP = a tRNA with a 3' CCACCA end + 3 diphosphate</text>
        <dbReference type="Rhea" id="RHEA:76235"/>
        <dbReference type="Rhea" id="RHEA-COMP:10468"/>
        <dbReference type="Rhea" id="RHEA-COMP:18655"/>
        <dbReference type="ChEBI" id="CHEBI:30616"/>
        <dbReference type="ChEBI" id="CHEBI:33019"/>
        <dbReference type="ChEBI" id="CHEBI:37563"/>
        <dbReference type="ChEBI" id="CHEBI:83071"/>
        <dbReference type="ChEBI" id="CHEBI:195187"/>
    </reaction>
    <physiologicalReaction direction="left-to-right" evidence="1">
        <dbReference type="Rhea" id="RHEA:76236"/>
    </physiologicalReaction>
</comment>
<comment type="cofactor">
    <cofactor evidence="1">
        <name>Mg(2+)</name>
        <dbReference type="ChEBI" id="CHEBI:18420"/>
    </cofactor>
</comment>
<comment type="subunit">
    <text evidence="1">Homodimer.</text>
</comment>
<comment type="miscellaneous">
    <text evidence="1">A single active site specifically recognizes both ATP and CTP and is responsible for their addition.</text>
</comment>
<comment type="similarity">
    <text evidence="1">Belongs to the tRNA nucleotidyltransferase/poly(A) polymerase family. Bacterial CCA-adding enzyme type 3 subfamily.</text>
</comment>
<protein>
    <recommendedName>
        <fullName evidence="1">CCA-adding enzyme</fullName>
        <ecNumber evidence="1">2.7.7.72</ecNumber>
    </recommendedName>
    <alternativeName>
        <fullName evidence="1">CCA tRNA nucleotidyltransferase</fullName>
    </alternativeName>
    <alternativeName>
        <fullName evidence="1">tRNA CCA-pyrophosphorylase</fullName>
    </alternativeName>
    <alternativeName>
        <fullName evidence="1">tRNA adenylyl-/cytidylyl- transferase</fullName>
    </alternativeName>
    <alternativeName>
        <fullName evidence="1">tRNA nucleotidyltransferase</fullName>
    </alternativeName>
    <alternativeName>
        <fullName evidence="1">tRNA-NT</fullName>
    </alternativeName>
</protein>
<proteinExistence type="inferred from homology"/>
<sequence>MRLETLPSEFQEALPVLEKIKAAGFEAYFVGGSVRDALLQRPIHDVDIASSSYPEETKRIFDRTVDVGIEHGTVLVLENNREYEVTTFRTEDVYVDYRRPSKVSFVRSLEEDLKRRDFTINALALDENGQVIDLFQGLDDLENQILRAVGTAAERFNEDALRIMRGFRFQAALDFDLEQDTFAAMKDCAPLLEKISVERIFIEFDKLLLAPFWRKGLEALLTSGAIEFLPDLKGSRAKLERLFDLASDFRFSASEQAWAALLLALDVQNVKGFLKKWKTSREFAKKAEDLVEIAAIRSERDLTKRDCYDYDIDLLLQAEELRQAQGLPVDFSAIQNLDASLTIHNKQEMVVNGGMLMQEFGFEPGPKLGQILKELEHAIVDGCLPNDLEAVYAYIEEKK</sequence>
<evidence type="ECO:0000255" key="1">
    <source>
        <dbReference type="HAMAP-Rule" id="MF_01263"/>
    </source>
</evidence>
<organism>
    <name type="scientific">Streptococcus sanguinis (strain SK36)</name>
    <dbReference type="NCBI Taxonomy" id="388919"/>
    <lineage>
        <taxon>Bacteria</taxon>
        <taxon>Bacillati</taxon>
        <taxon>Bacillota</taxon>
        <taxon>Bacilli</taxon>
        <taxon>Lactobacillales</taxon>
        <taxon>Streptococcaceae</taxon>
        <taxon>Streptococcus</taxon>
    </lineage>
</organism>
<feature type="chain" id="PRO_1000054344" description="CCA-adding enzyme">
    <location>
        <begin position="1"/>
        <end position="399"/>
    </location>
</feature>
<feature type="binding site" evidence="1">
    <location>
        <position position="32"/>
    </location>
    <ligand>
        <name>ATP</name>
        <dbReference type="ChEBI" id="CHEBI:30616"/>
    </ligand>
</feature>
<feature type="binding site" evidence="1">
    <location>
        <position position="32"/>
    </location>
    <ligand>
        <name>CTP</name>
        <dbReference type="ChEBI" id="CHEBI:37563"/>
    </ligand>
</feature>
<feature type="binding site" evidence="1">
    <location>
        <position position="35"/>
    </location>
    <ligand>
        <name>ATP</name>
        <dbReference type="ChEBI" id="CHEBI:30616"/>
    </ligand>
</feature>
<feature type="binding site" evidence="1">
    <location>
        <position position="35"/>
    </location>
    <ligand>
        <name>CTP</name>
        <dbReference type="ChEBI" id="CHEBI:37563"/>
    </ligand>
</feature>
<feature type="binding site" evidence="1">
    <location>
        <position position="45"/>
    </location>
    <ligand>
        <name>Mg(2+)</name>
        <dbReference type="ChEBI" id="CHEBI:18420"/>
    </ligand>
</feature>
<feature type="binding site" evidence="1">
    <location>
        <position position="47"/>
    </location>
    <ligand>
        <name>Mg(2+)</name>
        <dbReference type="ChEBI" id="CHEBI:18420"/>
    </ligand>
</feature>
<feature type="binding site" evidence="1">
    <location>
        <position position="116"/>
    </location>
    <ligand>
        <name>ATP</name>
        <dbReference type="ChEBI" id="CHEBI:30616"/>
    </ligand>
</feature>
<feature type="binding site" evidence="1">
    <location>
        <position position="116"/>
    </location>
    <ligand>
        <name>CTP</name>
        <dbReference type="ChEBI" id="CHEBI:37563"/>
    </ligand>
</feature>
<feature type="binding site" evidence="1">
    <location>
        <position position="159"/>
    </location>
    <ligand>
        <name>ATP</name>
        <dbReference type="ChEBI" id="CHEBI:30616"/>
    </ligand>
</feature>
<feature type="binding site" evidence="1">
    <location>
        <position position="159"/>
    </location>
    <ligand>
        <name>CTP</name>
        <dbReference type="ChEBI" id="CHEBI:37563"/>
    </ligand>
</feature>
<feature type="binding site" evidence="1">
    <location>
        <position position="162"/>
    </location>
    <ligand>
        <name>ATP</name>
        <dbReference type="ChEBI" id="CHEBI:30616"/>
    </ligand>
</feature>
<feature type="binding site" evidence="1">
    <location>
        <position position="162"/>
    </location>
    <ligand>
        <name>CTP</name>
        <dbReference type="ChEBI" id="CHEBI:37563"/>
    </ligand>
</feature>
<feature type="binding site" evidence="1">
    <location>
        <position position="165"/>
    </location>
    <ligand>
        <name>ATP</name>
        <dbReference type="ChEBI" id="CHEBI:30616"/>
    </ligand>
</feature>
<feature type="binding site" evidence="1">
    <location>
        <position position="165"/>
    </location>
    <ligand>
        <name>CTP</name>
        <dbReference type="ChEBI" id="CHEBI:37563"/>
    </ligand>
</feature>
<feature type="binding site" evidence="1">
    <location>
        <position position="168"/>
    </location>
    <ligand>
        <name>ATP</name>
        <dbReference type="ChEBI" id="CHEBI:30616"/>
    </ligand>
</feature>
<feature type="binding site" evidence="1">
    <location>
        <position position="168"/>
    </location>
    <ligand>
        <name>CTP</name>
        <dbReference type="ChEBI" id="CHEBI:37563"/>
    </ligand>
</feature>
<reference key="1">
    <citation type="journal article" date="2007" name="J. Bacteriol.">
        <title>Genome of the opportunistic pathogen Streptococcus sanguinis.</title>
        <authorList>
            <person name="Xu P."/>
            <person name="Alves J.M."/>
            <person name="Kitten T."/>
            <person name="Brown A."/>
            <person name="Chen Z."/>
            <person name="Ozaki L.S."/>
            <person name="Manque P."/>
            <person name="Ge X."/>
            <person name="Serrano M.G."/>
            <person name="Puiu D."/>
            <person name="Hendricks S."/>
            <person name="Wang Y."/>
            <person name="Chaplin M.D."/>
            <person name="Akan D."/>
            <person name="Paik S."/>
            <person name="Peterson D.L."/>
            <person name="Macrina F.L."/>
            <person name="Buck G.A."/>
        </authorList>
    </citation>
    <scope>NUCLEOTIDE SEQUENCE [LARGE SCALE GENOMIC DNA]</scope>
    <source>
        <strain>SK36</strain>
    </source>
</reference>
<gene>
    <name evidence="1" type="primary">cca</name>
    <name type="ordered locus">SSA_1086</name>
</gene>